<organism>
    <name type="scientific">Lachnoclostridium phytofermentans (strain ATCC 700394 / DSM 18823 / ISDg)</name>
    <name type="common">Clostridium phytofermentans</name>
    <dbReference type="NCBI Taxonomy" id="357809"/>
    <lineage>
        <taxon>Bacteria</taxon>
        <taxon>Bacillati</taxon>
        <taxon>Bacillota</taxon>
        <taxon>Clostridia</taxon>
        <taxon>Lachnospirales</taxon>
        <taxon>Lachnospiraceae</taxon>
    </lineage>
</organism>
<sequence>MPTFNQLVRKGRKTMEKNSQAPALQKGFNSLRKKTTDASAPQKRGVCTAVRTATPKKPNSALRKIARVRLSNGIEVTSYIPGEGHNLQEHSVVLIRGGRVKDLPGTRYHIVRGTLDTAGVAKRRQARSKYGAKRPKEAKK</sequence>
<proteinExistence type="inferred from homology"/>
<protein>
    <recommendedName>
        <fullName evidence="2">Small ribosomal subunit protein uS12</fullName>
    </recommendedName>
    <alternativeName>
        <fullName evidence="4">30S ribosomal protein S12</fullName>
    </alternativeName>
</protein>
<evidence type="ECO:0000250" key="1"/>
<evidence type="ECO:0000255" key="2">
    <source>
        <dbReference type="HAMAP-Rule" id="MF_00403"/>
    </source>
</evidence>
<evidence type="ECO:0000256" key="3">
    <source>
        <dbReference type="SAM" id="MobiDB-lite"/>
    </source>
</evidence>
<evidence type="ECO:0000305" key="4"/>
<gene>
    <name evidence="2" type="primary">rpsL</name>
    <name type="ordered locus">Cphy_0235</name>
</gene>
<comment type="function">
    <text evidence="2">With S4 and S5 plays an important role in translational accuracy.</text>
</comment>
<comment type="function">
    <text evidence="2">Interacts with and stabilizes bases of the 16S rRNA that are involved in tRNA selection in the A site and with the mRNA backbone. Located at the interface of the 30S and 50S subunits, it traverses the body of the 30S subunit contacting proteins on the other side and probably holding the rRNA structure together. The combined cluster of proteins S8, S12 and S17 appears to hold together the shoulder and platform of the 30S subunit.</text>
</comment>
<comment type="subunit">
    <text evidence="2">Part of the 30S ribosomal subunit. Contacts proteins S8 and S17. May interact with IF1 in the 30S initiation complex.</text>
</comment>
<comment type="similarity">
    <text evidence="2">Belongs to the universal ribosomal protein uS12 family.</text>
</comment>
<keyword id="KW-0488">Methylation</keyword>
<keyword id="KW-1185">Reference proteome</keyword>
<keyword id="KW-0687">Ribonucleoprotein</keyword>
<keyword id="KW-0689">Ribosomal protein</keyword>
<keyword id="KW-0694">RNA-binding</keyword>
<keyword id="KW-0699">rRNA-binding</keyword>
<keyword id="KW-0820">tRNA-binding</keyword>
<reference key="1">
    <citation type="submission" date="2007-11" db="EMBL/GenBank/DDBJ databases">
        <title>Complete genome sequence of Clostridium phytofermentans ISDg.</title>
        <authorList>
            <person name="Leschine S.B."/>
            <person name="Warnick T.A."/>
            <person name="Blanchard J.L."/>
            <person name="Schnell D.J."/>
            <person name="Petit E.L."/>
            <person name="LaTouf W.G."/>
            <person name="Copeland A."/>
            <person name="Lucas S."/>
            <person name="Lapidus A."/>
            <person name="Barry K."/>
            <person name="Glavina del Rio T."/>
            <person name="Dalin E."/>
            <person name="Tice H."/>
            <person name="Pitluck S."/>
            <person name="Kiss H."/>
            <person name="Brettin T."/>
            <person name="Bruce D."/>
            <person name="Detter J.C."/>
            <person name="Han C."/>
            <person name="Kuske C."/>
            <person name="Schmutz J."/>
            <person name="Larimer F."/>
            <person name="Land M."/>
            <person name="Hauser L."/>
            <person name="Kyrpides N."/>
            <person name="Kim E.A."/>
            <person name="Richardson P."/>
        </authorList>
    </citation>
    <scope>NUCLEOTIDE SEQUENCE [LARGE SCALE GENOMIC DNA]</scope>
    <source>
        <strain>ATCC 700394 / DSM 18823 / ISDg</strain>
    </source>
</reference>
<feature type="chain" id="PRO_1000080389" description="Small ribosomal subunit protein uS12">
    <location>
        <begin position="1"/>
        <end position="140"/>
    </location>
</feature>
<feature type="region of interest" description="Disordered" evidence="3">
    <location>
        <begin position="1"/>
        <end position="44"/>
    </location>
</feature>
<feature type="region of interest" description="Disordered" evidence="3">
    <location>
        <begin position="120"/>
        <end position="140"/>
    </location>
</feature>
<feature type="compositionally biased region" description="Basic residues" evidence="3">
    <location>
        <begin position="121"/>
        <end position="140"/>
    </location>
</feature>
<feature type="modified residue" description="3-methylthioaspartic acid" evidence="1">
    <location>
        <position position="102"/>
    </location>
</feature>
<dbReference type="EMBL" id="CP000885">
    <property type="protein sequence ID" value="ABX40622.1"/>
    <property type="molecule type" value="Genomic_DNA"/>
</dbReference>
<dbReference type="RefSeq" id="WP_012198265.1">
    <property type="nucleotide sequence ID" value="NC_010001.1"/>
</dbReference>
<dbReference type="SMR" id="A9KRZ1"/>
<dbReference type="STRING" id="357809.Cphy_0235"/>
<dbReference type="KEGG" id="cpy:Cphy_0235"/>
<dbReference type="eggNOG" id="COG0048">
    <property type="taxonomic scope" value="Bacteria"/>
</dbReference>
<dbReference type="HOGENOM" id="CLU_104295_1_2_9"/>
<dbReference type="OrthoDB" id="9802366at2"/>
<dbReference type="Proteomes" id="UP000000370">
    <property type="component" value="Chromosome"/>
</dbReference>
<dbReference type="GO" id="GO:0015935">
    <property type="term" value="C:small ribosomal subunit"/>
    <property type="evidence" value="ECO:0007669"/>
    <property type="project" value="InterPro"/>
</dbReference>
<dbReference type="GO" id="GO:0019843">
    <property type="term" value="F:rRNA binding"/>
    <property type="evidence" value="ECO:0007669"/>
    <property type="project" value="UniProtKB-UniRule"/>
</dbReference>
<dbReference type="GO" id="GO:0003735">
    <property type="term" value="F:structural constituent of ribosome"/>
    <property type="evidence" value="ECO:0007669"/>
    <property type="project" value="InterPro"/>
</dbReference>
<dbReference type="GO" id="GO:0000049">
    <property type="term" value="F:tRNA binding"/>
    <property type="evidence" value="ECO:0007669"/>
    <property type="project" value="UniProtKB-UniRule"/>
</dbReference>
<dbReference type="GO" id="GO:0006412">
    <property type="term" value="P:translation"/>
    <property type="evidence" value="ECO:0007669"/>
    <property type="project" value="UniProtKB-UniRule"/>
</dbReference>
<dbReference type="CDD" id="cd03368">
    <property type="entry name" value="Ribosomal_S12"/>
    <property type="match status" value="1"/>
</dbReference>
<dbReference type="FunFam" id="2.40.50.140:FF:000001">
    <property type="entry name" value="30S ribosomal protein S12"/>
    <property type="match status" value="1"/>
</dbReference>
<dbReference type="Gene3D" id="2.40.50.140">
    <property type="entry name" value="Nucleic acid-binding proteins"/>
    <property type="match status" value="1"/>
</dbReference>
<dbReference type="HAMAP" id="MF_00403_B">
    <property type="entry name" value="Ribosomal_uS12_B"/>
    <property type="match status" value="1"/>
</dbReference>
<dbReference type="InterPro" id="IPR012340">
    <property type="entry name" value="NA-bd_OB-fold"/>
</dbReference>
<dbReference type="InterPro" id="IPR006032">
    <property type="entry name" value="Ribosomal_uS12"/>
</dbReference>
<dbReference type="InterPro" id="IPR005679">
    <property type="entry name" value="Ribosomal_uS12_bac"/>
</dbReference>
<dbReference type="NCBIfam" id="TIGR00981">
    <property type="entry name" value="rpsL_bact"/>
    <property type="match status" value="1"/>
</dbReference>
<dbReference type="PANTHER" id="PTHR11652">
    <property type="entry name" value="30S RIBOSOMAL PROTEIN S12 FAMILY MEMBER"/>
    <property type="match status" value="1"/>
</dbReference>
<dbReference type="Pfam" id="PF00164">
    <property type="entry name" value="Ribosom_S12_S23"/>
    <property type="match status" value="1"/>
</dbReference>
<dbReference type="PRINTS" id="PR01034">
    <property type="entry name" value="RIBOSOMALS12"/>
</dbReference>
<dbReference type="SUPFAM" id="SSF50249">
    <property type="entry name" value="Nucleic acid-binding proteins"/>
    <property type="match status" value="1"/>
</dbReference>
<dbReference type="PROSITE" id="PS00055">
    <property type="entry name" value="RIBOSOMAL_S12"/>
    <property type="match status" value="1"/>
</dbReference>
<accession>A9KRZ1</accession>
<name>RS12_LACP7</name>